<organism>
    <name type="scientific">Pithecopus rohdei</name>
    <name type="common">Rohde's leaf frog</name>
    <name type="synonym">Phyllomedusa rohdei</name>
    <dbReference type="NCBI Taxonomy" id="8394"/>
    <lineage>
        <taxon>Eukaryota</taxon>
        <taxon>Metazoa</taxon>
        <taxon>Chordata</taxon>
        <taxon>Craniata</taxon>
        <taxon>Vertebrata</taxon>
        <taxon>Euteleostomi</taxon>
        <taxon>Amphibia</taxon>
        <taxon>Batrachia</taxon>
        <taxon>Anura</taxon>
        <taxon>Neobatrachia</taxon>
        <taxon>Hyloidea</taxon>
        <taxon>Hylidae</taxon>
        <taxon>Phyllomedusinae</taxon>
        <taxon>Pithecopus</taxon>
    </lineage>
</organism>
<comment type="subcellular location">
    <subcellularLocation>
        <location>Secreted</location>
    </subcellularLocation>
</comment>
<comment type="tissue specificity">
    <text>Expressed by the skin glands.</text>
</comment>
<comment type="similarity">
    <text evidence="2">Belongs to the bombesin/neuromedin-B/ranatensin family.</text>
</comment>
<sequence>QLWATGHFM</sequence>
<evidence type="ECO:0000269" key="1">
    <source>
    </source>
</evidence>
<evidence type="ECO:0000305" key="2"/>
<reference key="1">
    <citation type="journal article" date="1985" name="FEBS Lett.">
        <title>Rohdei-litorin: a new peptide from the skin of Phyllomedusa rohdei.</title>
        <authorList>
            <person name="Barra D."/>
            <person name="Erspamer G.F."/>
            <person name="Simmaco M."/>
            <person name="Bossa F."/>
            <person name="Melchiorri P."/>
            <person name="Erspamer V."/>
        </authorList>
    </citation>
    <scope>PROTEIN SEQUENCE</scope>
    <scope>PYROGLUTAMATE FORMATION AT GLN-1</scope>
    <scope>AMIDATION AT MET-9</scope>
    <source>
        <tissue>Skin secretion</tissue>
    </source>
</reference>
<keyword id="KW-0027">Amidation</keyword>
<keyword id="KW-0878">Amphibian defense peptide</keyword>
<keyword id="KW-0903">Direct protein sequencing</keyword>
<keyword id="KW-0873">Pyrrolidone carboxylic acid</keyword>
<keyword id="KW-0964">Secreted</keyword>
<feature type="peptide" id="PRO_0000043494" description="Rhodei-litorin">
    <location>
        <begin position="1"/>
        <end position="9"/>
    </location>
</feature>
<feature type="modified residue" description="Pyrrolidone carboxylic acid" evidence="1">
    <location>
        <position position="1"/>
    </location>
</feature>
<feature type="modified residue" description="Methionine amide" evidence="1">
    <location>
        <position position="9"/>
    </location>
</feature>
<protein>
    <recommendedName>
        <fullName>Rhodei-litorin</fullName>
    </recommendedName>
</protein>
<dbReference type="PIR" id="S07241">
    <property type="entry name" value="S07241"/>
</dbReference>
<dbReference type="GO" id="GO:0005576">
    <property type="term" value="C:extracellular region"/>
    <property type="evidence" value="ECO:0007669"/>
    <property type="project" value="UniProtKB-SubCell"/>
</dbReference>
<dbReference type="GO" id="GO:0006952">
    <property type="term" value="P:defense response"/>
    <property type="evidence" value="ECO:0007669"/>
    <property type="project" value="UniProtKB-KW"/>
</dbReference>
<dbReference type="GO" id="GO:0007218">
    <property type="term" value="P:neuropeptide signaling pathway"/>
    <property type="evidence" value="ECO:0007669"/>
    <property type="project" value="InterPro"/>
</dbReference>
<dbReference type="InterPro" id="IPR000874">
    <property type="entry name" value="Bombesin"/>
</dbReference>
<dbReference type="Pfam" id="PF02044">
    <property type="entry name" value="Bombesin"/>
    <property type="match status" value="1"/>
</dbReference>
<dbReference type="PROSITE" id="PS00257">
    <property type="entry name" value="BOMBESIN"/>
    <property type="match status" value="1"/>
</dbReference>
<proteinExistence type="evidence at protein level"/>
<name>LITR_PITRO</name>
<accession>P08946</accession>